<name>CDD_YEAST</name>
<dbReference type="EC" id="3.5.4.5" evidence="3"/>
<dbReference type="EMBL" id="AF080089">
    <property type="protein sequence ID" value="AAD04031.1"/>
    <property type="molecule type" value="Genomic_DNA"/>
</dbReference>
<dbReference type="EMBL" id="U20865">
    <property type="protein sequence ID" value="AAB67399.1"/>
    <property type="molecule type" value="Genomic_DNA"/>
</dbReference>
<dbReference type="EMBL" id="AY557930">
    <property type="protein sequence ID" value="AAS56256.1"/>
    <property type="molecule type" value="Genomic_DNA"/>
</dbReference>
<dbReference type="EMBL" id="BK006945">
    <property type="protein sequence ID" value="DAA09559.1"/>
    <property type="molecule type" value="Genomic_DNA"/>
</dbReference>
<dbReference type="PIR" id="S59391">
    <property type="entry name" value="S59391"/>
</dbReference>
<dbReference type="RefSeq" id="NP_013346.1">
    <property type="nucleotide sequence ID" value="NM_001182132.1"/>
</dbReference>
<dbReference type="PDB" id="1R5T">
    <property type="method" value="X-ray"/>
    <property type="resolution" value="2.00 A"/>
    <property type="chains" value="A/B/C/D=1-142"/>
</dbReference>
<dbReference type="PDBsum" id="1R5T"/>
<dbReference type="SMR" id="Q06549"/>
<dbReference type="BioGRID" id="31512">
    <property type="interactions" value="71"/>
</dbReference>
<dbReference type="DIP" id="DIP-1252N"/>
<dbReference type="FunCoup" id="Q06549">
    <property type="interactions" value="232"/>
</dbReference>
<dbReference type="IntAct" id="Q06549">
    <property type="interactions" value="10"/>
</dbReference>
<dbReference type="MINT" id="Q06549"/>
<dbReference type="STRING" id="4932.YLR245C"/>
<dbReference type="iPTMnet" id="Q06549"/>
<dbReference type="PaxDb" id="4932-YLR245C"/>
<dbReference type="PeptideAtlas" id="Q06549"/>
<dbReference type="TopDownProteomics" id="Q06549"/>
<dbReference type="EnsemblFungi" id="YLR245C_mRNA">
    <property type="protein sequence ID" value="YLR245C"/>
    <property type="gene ID" value="YLR245C"/>
</dbReference>
<dbReference type="GeneID" id="850946"/>
<dbReference type="KEGG" id="sce:YLR245C"/>
<dbReference type="AGR" id="SGD:S000004235"/>
<dbReference type="SGD" id="S000004235">
    <property type="gene designation" value="CDD1"/>
</dbReference>
<dbReference type="VEuPathDB" id="FungiDB:YLR245C"/>
<dbReference type="eggNOG" id="KOG0833">
    <property type="taxonomic scope" value="Eukaryota"/>
</dbReference>
<dbReference type="GeneTree" id="ENSGT00940000168030"/>
<dbReference type="HOGENOM" id="CLU_097262_1_2_1"/>
<dbReference type="InParanoid" id="Q06549"/>
<dbReference type="OMA" id="LTHFTCV"/>
<dbReference type="OrthoDB" id="414540at2759"/>
<dbReference type="BioCyc" id="MetaCyc:YLR245C-MONOMER"/>
<dbReference type="BioCyc" id="YEAST:YLR245C-MONOMER"/>
<dbReference type="Reactome" id="R-SCE-6798695">
    <property type="pathway name" value="Neutrophil degranulation"/>
</dbReference>
<dbReference type="Reactome" id="R-SCE-73614">
    <property type="pathway name" value="Pyrimidine salvage"/>
</dbReference>
<dbReference type="BioGRID-ORCS" id="850946">
    <property type="hits" value="1 hit in 10 CRISPR screens"/>
</dbReference>
<dbReference type="EvolutionaryTrace" id="Q06549"/>
<dbReference type="PRO" id="PR:Q06549"/>
<dbReference type="Proteomes" id="UP000002311">
    <property type="component" value="Chromosome XII"/>
</dbReference>
<dbReference type="RNAct" id="Q06549">
    <property type="molecule type" value="protein"/>
</dbReference>
<dbReference type="GO" id="GO:0005737">
    <property type="term" value="C:cytoplasm"/>
    <property type="evidence" value="ECO:0000314"/>
    <property type="project" value="SGD"/>
</dbReference>
<dbReference type="GO" id="GO:0005829">
    <property type="term" value="C:cytosol"/>
    <property type="evidence" value="ECO:0000318"/>
    <property type="project" value="GO_Central"/>
</dbReference>
<dbReference type="GO" id="GO:0005634">
    <property type="term" value="C:nucleus"/>
    <property type="evidence" value="ECO:0000314"/>
    <property type="project" value="SGD"/>
</dbReference>
<dbReference type="GO" id="GO:0004126">
    <property type="term" value="F:cytidine deaminase activity"/>
    <property type="evidence" value="ECO:0000314"/>
    <property type="project" value="SGD"/>
</dbReference>
<dbReference type="GO" id="GO:0042802">
    <property type="term" value="F:identical protein binding"/>
    <property type="evidence" value="ECO:0000353"/>
    <property type="project" value="IntAct"/>
</dbReference>
<dbReference type="GO" id="GO:0008270">
    <property type="term" value="F:zinc ion binding"/>
    <property type="evidence" value="ECO:0000318"/>
    <property type="project" value="GO_Central"/>
</dbReference>
<dbReference type="GO" id="GO:0006216">
    <property type="term" value="P:cytidine catabolic process"/>
    <property type="evidence" value="ECO:0000314"/>
    <property type="project" value="SGD"/>
</dbReference>
<dbReference type="GO" id="GO:0009972">
    <property type="term" value="P:cytidine deamination"/>
    <property type="evidence" value="ECO:0000318"/>
    <property type="project" value="GO_Central"/>
</dbReference>
<dbReference type="GO" id="GO:0006217">
    <property type="term" value="P:deoxycytidine catabolic process"/>
    <property type="evidence" value="ECO:0000314"/>
    <property type="project" value="SGD"/>
</dbReference>
<dbReference type="GO" id="GO:0008655">
    <property type="term" value="P:pyrimidine-containing compound salvage"/>
    <property type="evidence" value="ECO:0000314"/>
    <property type="project" value="SGD"/>
</dbReference>
<dbReference type="CDD" id="cd01283">
    <property type="entry name" value="cytidine_deaminase"/>
    <property type="match status" value="1"/>
</dbReference>
<dbReference type="FunFam" id="3.40.140.10:FF:000008">
    <property type="entry name" value="Cytidine deaminase"/>
    <property type="match status" value="1"/>
</dbReference>
<dbReference type="Gene3D" id="3.40.140.10">
    <property type="entry name" value="Cytidine Deaminase, domain 2"/>
    <property type="match status" value="1"/>
</dbReference>
<dbReference type="InterPro" id="IPR016192">
    <property type="entry name" value="APOBEC/CMP_deaminase_Zn-bd"/>
</dbReference>
<dbReference type="InterPro" id="IPR002125">
    <property type="entry name" value="CMP_dCMP_dom"/>
</dbReference>
<dbReference type="InterPro" id="IPR050202">
    <property type="entry name" value="Cyt/Deoxycyt_deaminase"/>
</dbReference>
<dbReference type="InterPro" id="IPR006262">
    <property type="entry name" value="Cyt_deam_tetra"/>
</dbReference>
<dbReference type="InterPro" id="IPR016193">
    <property type="entry name" value="Cytidine_deaminase-like"/>
</dbReference>
<dbReference type="NCBIfam" id="TIGR01354">
    <property type="entry name" value="cyt_deam_tetra"/>
    <property type="match status" value="1"/>
</dbReference>
<dbReference type="NCBIfam" id="NF004064">
    <property type="entry name" value="PRK05578.1"/>
    <property type="match status" value="1"/>
</dbReference>
<dbReference type="PANTHER" id="PTHR11644">
    <property type="entry name" value="CYTIDINE DEAMINASE"/>
    <property type="match status" value="1"/>
</dbReference>
<dbReference type="PANTHER" id="PTHR11644:SF2">
    <property type="entry name" value="CYTIDINE DEAMINASE"/>
    <property type="match status" value="1"/>
</dbReference>
<dbReference type="Pfam" id="PF00383">
    <property type="entry name" value="dCMP_cyt_deam_1"/>
    <property type="match status" value="1"/>
</dbReference>
<dbReference type="SUPFAM" id="SSF53927">
    <property type="entry name" value="Cytidine deaminase-like"/>
    <property type="match status" value="1"/>
</dbReference>
<dbReference type="PROSITE" id="PS00903">
    <property type="entry name" value="CYT_DCMP_DEAMINASES_1"/>
    <property type="match status" value="1"/>
</dbReference>
<dbReference type="PROSITE" id="PS51747">
    <property type="entry name" value="CYT_DCMP_DEAMINASES_2"/>
    <property type="match status" value="1"/>
</dbReference>
<comment type="function">
    <text>This enzyme scavenges exogenous and endogenous cytidine and 2'-deoxycytidine for UMP synthesis.</text>
</comment>
<comment type="catalytic activity">
    <reaction>
        <text>cytidine + H2O + H(+) = uridine + NH4(+)</text>
        <dbReference type="Rhea" id="RHEA:16069"/>
        <dbReference type="ChEBI" id="CHEBI:15377"/>
        <dbReference type="ChEBI" id="CHEBI:15378"/>
        <dbReference type="ChEBI" id="CHEBI:16704"/>
        <dbReference type="ChEBI" id="CHEBI:17562"/>
        <dbReference type="ChEBI" id="CHEBI:28938"/>
        <dbReference type="EC" id="3.5.4.5"/>
    </reaction>
</comment>
<comment type="catalytic activity">
    <reaction evidence="3">
        <text>2'-deoxycytidine + H2O + H(+) = 2'-deoxyuridine + NH4(+)</text>
        <dbReference type="Rhea" id="RHEA:13433"/>
        <dbReference type="ChEBI" id="CHEBI:15377"/>
        <dbReference type="ChEBI" id="CHEBI:15378"/>
        <dbReference type="ChEBI" id="CHEBI:15698"/>
        <dbReference type="ChEBI" id="CHEBI:16450"/>
        <dbReference type="ChEBI" id="CHEBI:28938"/>
        <dbReference type="EC" id="3.5.4.5"/>
    </reaction>
    <physiologicalReaction direction="left-to-right" evidence="7">
        <dbReference type="Rhea" id="RHEA:13434"/>
    </physiologicalReaction>
</comment>
<comment type="cofactor">
    <cofactor>
        <name>Zn(2+)</name>
        <dbReference type="ChEBI" id="CHEBI:29105"/>
    </cofactor>
</comment>
<comment type="subunit">
    <text evidence="5">Homodimer.</text>
</comment>
<comment type="interaction">
    <interactant intactId="EBI-4455">
        <id>Q06549</id>
    </interactant>
    <interactant intactId="EBI-4455">
        <id>Q06549</id>
        <label>CDD1</label>
    </interactant>
    <organismsDiffer>false</organismsDiffer>
    <experiments>4</experiments>
</comment>
<comment type="miscellaneous">
    <text evidence="4">Present with 3120 molecules/cell in log phase SD medium.</text>
</comment>
<comment type="similarity">
    <text evidence="6">Belongs to the cytidine and deoxycytidylate deaminase family.</text>
</comment>
<organism>
    <name type="scientific">Saccharomyces cerevisiae (strain ATCC 204508 / S288c)</name>
    <name type="common">Baker's yeast</name>
    <dbReference type="NCBI Taxonomy" id="559292"/>
    <lineage>
        <taxon>Eukaryota</taxon>
        <taxon>Fungi</taxon>
        <taxon>Dikarya</taxon>
        <taxon>Ascomycota</taxon>
        <taxon>Saccharomycotina</taxon>
        <taxon>Saccharomycetes</taxon>
        <taxon>Saccharomycetales</taxon>
        <taxon>Saccharomycetaceae</taxon>
        <taxon>Saccharomyces</taxon>
    </lineage>
</organism>
<sequence>MKVGGIEDRQLEALKRAALKACELSYSPYSHFRVGCSILTNNDVIFTGANVENASYSNCICAERSAMIQVLMAGHRSGWKCMVICGDSEDQCVSPCGVCRQFINEFVVKDFPIVMLNSTGSRSKVMTMGELLPMAFGPSHLN</sequence>
<evidence type="ECO:0000250" key="1"/>
<evidence type="ECO:0000255" key="2">
    <source>
        <dbReference type="PROSITE-ProRule" id="PRU01083"/>
    </source>
</evidence>
<evidence type="ECO:0000269" key="3">
    <source>
    </source>
</evidence>
<evidence type="ECO:0000269" key="4">
    <source>
    </source>
</evidence>
<evidence type="ECO:0000269" key="5">
    <source>
    </source>
</evidence>
<evidence type="ECO:0000305" key="6"/>
<evidence type="ECO:0000305" key="7">
    <source>
    </source>
</evidence>
<evidence type="ECO:0007829" key="8">
    <source>
        <dbReference type="PDB" id="1R5T"/>
    </source>
</evidence>
<proteinExistence type="evidence at protein level"/>
<protein>
    <recommendedName>
        <fullName>Cytidine deaminase</fullName>
        <shortName>CDA</shortName>
        <ecNumber evidence="3">3.5.4.5</ecNumber>
    </recommendedName>
    <alternativeName>
        <fullName>Cytidine aminohydrolase</fullName>
    </alternativeName>
</protein>
<accession>Q06549</accession>
<accession>D6VYP3</accession>
<keyword id="KW-0002">3D-structure</keyword>
<keyword id="KW-0378">Hydrolase</keyword>
<keyword id="KW-0479">Metal-binding</keyword>
<keyword id="KW-1185">Reference proteome</keyword>
<keyword id="KW-0862">Zinc</keyword>
<reference key="1">
    <citation type="journal article" date="1999" name="Curr. Genet.">
        <title>New insights into the pyrimidine salvage pathway of Saccharomyces cerevisiae: requirement of six genes for cytidine metabolism.</title>
        <authorList>
            <person name="Kurtz J.-E."/>
            <person name="Exinger F."/>
            <person name="Erbs P."/>
            <person name="Jund R."/>
        </authorList>
    </citation>
    <scope>NUCLEOTIDE SEQUENCE [GENOMIC DNA]</scope>
    <scope>CHARACTERIZATION</scope>
    <scope>CATALYTIC ACTIVITY</scope>
    <source>
        <strain>ATCC 28383 / FL100 / VTT C-80102</strain>
    </source>
</reference>
<reference key="2">
    <citation type="journal article" date="1997" name="Nature">
        <title>The nucleotide sequence of Saccharomyces cerevisiae chromosome XII.</title>
        <authorList>
            <person name="Johnston M."/>
            <person name="Hillier L.W."/>
            <person name="Riles L."/>
            <person name="Albermann K."/>
            <person name="Andre B."/>
            <person name="Ansorge W."/>
            <person name="Benes V."/>
            <person name="Brueckner M."/>
            <person name="Delius H."/>
            <person name="Dubois E."/>
            <person name="Duesterhoeft A."/>
            <person name="Entian K.-D."/>
            <person name="Floeth M."/>
            <person name="Goffeau A."/>
            <person name="Hebling U."/>
            <person name="Heumann K."/>
            <person name="Heuss-Neitzel D."/>
            <person name="Hilbert H."/>
            <person name="Hilger F."/>
            <person name="Kleine K."/>
            <person name="Koetter P."/>
            <person name="Louis E.J."/>
            <person name="Messenguy F."/>
            <person name="Mewes H.-W."/>
            <person name="Miosga T."/>
            <person name="Moestl D."/>
            <person name="Mueller-Auer S."/>
            <person name="Nentwich U."/>
            <person name="Obermaier B."/>
            <person name="Piravandi E."/>
            <person name="Pohl T.M."/>
            <person name="Portetelle D."/>
            <person name="Purnelle B."/>
            <person name="Rechmann S."/>
            <person name="Rieger M."/>
            <person name="Rinke M."/>
            <person name="Rose M."/>
            <person name="Scharfe M."/>
            <person name="Scherens B."/>
            <person name="Scholler P."/>
            <person name="Schwager C."/>
            <person name="Schwarz S."/>
            <person name="Underwood A.P."/>
            <person name="Urrestarazu L.A."/>
            <person name="Vandenbol M."/>
            <person name="Verhasselt P."/>
            <person name="Vierendeels F."/>
            <person name="Voet M."/>
            <person name="Volckaert G."/>
            <person name="Voss H."/>
            <person name="Wambutt R."/>
            <person name="Wedler E."/>
            <person name="Wedler H."/>
            <person name="Zimmermann F.K."/>
            <person name="Zollner A."/>
            <person name="Hani J."/>
            <person name="Hoheisel J.D."/>
        </authorList>
    </citation>
    <scope>NUCLEOTIDE SEQUENCE [LARGE SCALE GENOMIC DNA]</scope>
    <source>
        <strain>ATCC 204508 / S288c</strain>
    </source>
</reference>
<reference key="3">
    <citation type="journal article" date="2014" name="G3 (Bethesda)">
        <title>The reference genome sequence of Saccharomyces cerevisiae: Then and now.</title>
        <authorList>
            <person name="Engel S.R."/>
            <person name="Dietrich F.S."/>
            <person name="Fisk D.G."/>
            <person name="Binkley G."/>
            <person name="Balakrishnan R."/>
            <person name="Costanzo M.C."/>
            <person name="Dwight S.S."/>
            <person name="Hitz B.C."/>
            <person name="Karra K."/>
            <person name="Nash R.S."/>
            <person name="Weng S."/>
            <person name="Wong E.D."/>
            <person name="Lloyd P."/>
            <person name="Skrzypek M.S."/>
            <person name="Miyasato S.R."/>
            <person name="Simison M."/>
            <person name="Cherry J.M."/>
        </authorList>
    </citation>
    <scope>GENOME REANNOTATION</scope>
    <source>
        <strain>ATCC 204508 / S288c</strain>
    </source>
</reference>
<reference key="4">
    <citation type="journal article" date="2007" name="Genome Res.">
        <title>Approaching a complete repository of sequence-verified protein-encoding clones for Saccharomyces cerevisiae.</title>
        <authorList>
            <person name="Hu Y."/>
            <person name="Rolfs A."/>
            <person name="Bhullar B."/>
            <person name="Murthy T.V.S."/>
            <person name="Zhu C."/>
            <person name="Berger M.F."/>
            <person name="Camargo A.A."/>
            <person name="Kelley F."/>
            <person name="McCarron S."/>
            <person name="Jepson D."/>
            <person name="Richardson A."/>
            <person name="Raphael J."/>
            <person name="Moreira D."/>
            <person name="Taycher E."/>
            <person name="Zuo D."/>
            <person name="Mohr S."/>
            <person name="Kane M.F."/>
            <person name="Williamson J."/>
            <person name="Simpson A.J.G."/>
            <person name="Bulyk M.L."/>
            <person name="Harlow E."/>
            <person name="Marsischky G."/>
            <person name="Kolodner R.D."/>
            <person name="LaBaer J."/>
        </authorList>
    </citation>
    <scope>NUCLEOTIDE SEQUENCE [GENOMIC DNA]</scope>
    <source>
        <strain>ATCC 204508 / S288c</strain>
    </source>
</reference>
<reference key="5">
    <citation type="journal article" date="2003" name="Nature">
        <title>Global analysis of protein expression in yeast.</title>
        <authorList>
            <person name="Ghaemmaghami S."/>
            <person name="Huh W.-K."/>
            <person name="Bower K."/>
            <person name="Howson R.W."/>
            <person name="Belle A."/>
            <person name="Dephoure N."/>
            <person name="O'Shea E.K."/>
            <person name="Weissman J.S."/>
        </authorList>
    </citation>
    <scope>LEVEL OF PROTEIN EXPRESSION [LARGE SCALE ANALYSIS]</scope>
</reference>
<reference key="6">
    <citation type="journal article" date="2012" name="Proc. Natl. Acad. Sci. U.S.A.">
        <title>N-terminal acetylome analyses and functional insights of the N-terminal acetyltransferase NatB.</title>
        <authorList>
            <person name="Van Damme P."/>
            <person name="Lasa M."/>
            <person name="Polevoda B."/>
            <person name="Gazquez C."/>
            <person name="Elosegui-Artola A."/>
            <person name="Kim D.S."/>
            <person name="De Juan-Pardo E."/>
            <person name="Demeyer K."/>
            <person name="Hole K."/>
            <person name="Larrea E."/>
            <person name="Timmerman E."/>
            <person name="Prieto J."/>
            <person name="Arnesen T."/>
            <person name="Sherman F."/>
            <person name="Gevaert K."/>
            <person name="Aldabe R."/>
        </authorList>
    </citation>
    <scope>IDENTIFICATION BY MASS SPECTROMETRY [LARGE SCALE ANALYSIS]</scope>
</reference>
<reference key="7">
    <citation type="journal article" date="2004" name="Proc. Natl. Acad. Sci. U.S.A.">
        <title>The structure of a yeast RNA-editing deaminase provides insight into the fold and function of activation-induced deaminase and APOBEC-1.</title>
        <authorList>
            <person name="Xie K."/>
            <person name="Sowden M.P."/>
            <person name="Dance G.S."/>
            <person name="Torelli A.T."/>
            <person name="Smith H.C."/>
            <person name="Wedekind J.E."/>
        </authorList>
    </citation>
    <scope>X-RAY CRYSTALLOGRAPHY (2.0 ANGSTROMS) IN COMPLEX WITH ZINC IONS</scope>
    <scope>SUBUNIT</scope>
</reference>
<feature type="chain" id="PRO_0000171685" description="Cytidine deaminase">
    <location>
        <begin position="1"/>
        <end position="142"/>
    </location>
</feature>
<feature type="domain" description="CMP/dCMP-type deaminase" evidence="2">
    <location>
        <begin position="9"/>
        <end position="139"/>
    </location>
</feature>
<feature type="active site" description="Proton donor" evidence="1">
    <location>
        <position position="63"/>
    </location>
</feature>
<feature type="binding site" evidence="1">
    <location>
        <begin position="50"/>
        <end position="52"/>
    </location>
    <ligand>
        <name>substrate</name>
    </ligand>
</feature>
<feature type="binding site">
    <location>
        <position position="61"/>
    </location>
    <ligand>
        <name>Zn(2+)</name>
        <dbReference type="ChEBI" id="CHEBI:29105"/>
        <note>catalytic</note>
    </ligand>
</feature>
<feature type="binding site">
    <location>
        <position position="96"/>
    </location>
    <ligand>
        <name>Zn(2+)</name>
        <dbReference type="ChEBI" id="CHEBI:29105"/>
        <note>catalytic</note>
    </ligand>
</feature>
<feature type="binding site">
    <location>
        <position position="99"/>
    </location>
    <ligand>
        <name>Zn(2+)</name>
        <dbReference type="ChEBI" id="CHEBI:29105"/>
        <note>catalytic</note>
    </ligand>
</feature>
<feature type="helix" evidence="8">
    <location>
        <begin position="8"/>
        <end position="21"/>
    </location>
</feature>
<feature type="helix" evidence="8">
    <location>
        <begin position="22"/>
        <end position="24"/>
    </location>
</feature>
<feature type="turn" evidence="8">
    <location>
        <begin position="28"/>
        <end position="30"/>
    </location>
</feature>
<feature type="strand" evidence="8">
    <location>
        <begin position="34"/>
        <end position="39"/>
    </location>
</feature>
<feature type="strand" evidence="8">
    <location>
        <begin position="45"/>
        <end position="49"/>
    </location>
</feature>
<feature type="helix" evidence="8">
    <location>
        <begin position="56"/>
        <end position="58"/>
    </location>
</feature>
<feature type="helix" evidence="8">
    <location>
        <begin position="62"/>
        <end position="72"/>
    </location>
</feature>
<feature type="strand" evidence="8">
    <location>
        <begin position="81"/>
        <end position="87"/>
    </location>
</feature>
<feature type="strand" evidence="8">
    <location>
        <begin position="89"/>
        <end position="91"/>
    </location>
</feature>
<feature type="helix" evidence="8">
    <location>
        <begin position="97"/>
        <end position="104"/>
    </location>
</feature>
<feature type="strand" evidence="8">
    <location>
        <begin position="112"/>
        <end position="116"/>
    </location>
</feature>
<feature type="strand" evidence="8">
    <location>
        <begin position="118"/>
        <end position="127"/>
    </location>
</feature>
<feature type="helix" evidence="8">
    <location>
        <begin position="128"/>
        <end position="131"/>
    </location>
</feature>
<feature type="helix" evidence="8">
    <location>
        <begin position="138"/>
        <end position="140"/>
    </location>
</feature>
<gene>
    <name type="primary">CDD1</name>
    <name type="ordered locus">YLR245C</name>
    <name type="ORF">L9672.13</name>
</gene>